<sequence length="441" mass="50859">MFGAKKGNGHNKDFYDFNPKNLETIRNDLKNRHAELVIDALLKEEARQEIKRIIKRDYPVHFMDIDEDKVDDVIEYVVSELVGTGVIERLIKDRPDITDISYNGSHLIVESSDYKEIYKDNEHQITEQYITRLIQKFAHAVGKEFTPKNPIFDGVYGSIRINAVHSQNTNGNSTMSLRIVRPNLVLNEKNFETFAPQFIYDFFKVVMESRNNILISGETGTGKTEVLKLLFSFVRFDHKAIMIEDVPETHVKSLFPDKDVFSWLTGNGVTVTDEIVAALRNNPRWIMISELRGKETYEMIQAVLSGHHVVTSLHSVDAETSPKRLVNMSKIGYQVDEKSLEEDIMRYFNFGFHIKRVVVKTTDTTGKPIKRVVRYLAKIVEYSVEGCQMVFEQKYRNGKFTFSTGTLSEEFHDKLAEIDLSYELPKYTDEVAFKKGLIISR</sequence>
<dbReference type="EMBL" id="AF188935">
    <property type="protein sequence ID" value="AAF13630.1"/>
    <property type="molecule type" value="Genomic_DNA"/>
</dbReference>
<dbReference type="EMBL" id="AE011191">
    <property type="protein sequence ID" value="AAM26183.1"/>
    <property type="molecule type" value="Genomic_DNA"/>
</dbReference>
<dbReference type="EMBL" id="AE017335">
    <property type="protein sequence ID" value="AAT28953.2"/>
    <property type="molecule type" value="Genomic_DNA"/>
</dbReference>
<dbReference type="RefSeq" id="NP_053180.1">
    <property type="nucleotide sequence ID" value="NC_002146.1"/>
</dbReference>
<dbReference type="RefSeq" id="WP_000781549.1">
    <property type="nucleotide sequence ID" value="NZ_VTZL01000009.1"/>
</dbReference>
<dbReference type="SMR" id="Q6F054"/>
<dbReference type="GeneID" id="45025336"/>
<dbReference type="KEGG" id="bar:GBAA_pXO2_0023"/>
<dbReference type="HOGENOM" id="CLU_005379_7_2_9"/>
<dbReference type="OMA" id="RITCESA"/>
<dbReference type="Proteomes" id="UP000000594">
    <property type="component" value="Plasmid pXO2"/>
</dbReference>
<dbReference type="GO" id="GO:0005524">
    <property type="term" value="F:ATP binding"/>
    <property type="evidence" value="ECO:0007669"/>
    <property type="project" value="UniProtKB-KW"/>
</dbReference>
<dbReference type="GO" id="GO:0016887">
    <property type="term" value="F:ATP hydrolysis activity"/>
    <property type="evidence" value="ECO:0007669"/>
    <property type="project" value="InterPro"/>
</dbReference>
<dbReference type="CDD" id="cd01130">
    <property type="entry name" value="VirB11-like_ATPase"/>
    <property type="match status" value="1"/>
</dbReference>
<dbReference type="Gene3D" id="3.30.450.380">
    <property type="match status" value="1"/>
</dbReference>
<dbReference type="Gene3D" id="3.40.50.300">
    <property type="entry name" value="P-loop containing nucleotide triphosphate hydrolases"/>
    <property type="match status" value="1"/>
</dbReference>
<dbReference type="InterPro" id="IPR027417">
    <property type="entry name" value="P-loop_NTPase"/>
</dbReference>
<dbReference type="InterPro" id="IPR025662">
    <property type="entry name" value="Sigma_54_int_dom_ATP-bd_1"/>
</dbReference>
<dbReference type="InterPro" id="IPR001482">
    <property type="entry name" value="T2SS/T4SS_dom"/>
</dbReference>
<dbReference type="InterPro" id="IPR050921">
    <property type="entry name" value="T4SS_GSP_E_ATPase"/>
</dbReference>
<dbReference type="PANTHER" id="PTHR30486">
    <property type="entry name" value="TWITCHING MOTILITY PROTEIN PILT"/>
    <property type="match status" value="1"/>
</dbReference>
<dbReference type="PANTHER" id="PTHR30486:SF6">
    <property type="entry name" value="TYPE IV PILUS RETRACTATION ATPASE PILT"/>
    <property type="match status" value="1"/>
</dbReference>
<dbReference type="Pfam" id="PF00437">
    <property type="entry name" value="T2SSE"/>
    <property type="match status" value="1"/>
</dbReference>
<dbReference type="SUPFAM" id="SSF52540">
    <property type="entry name" value="P-loop containing nucleoside triphosphate hydrolases"/>
    <property type="match status" value="1"/>
</dbReference>
<organism>
    <name type="scientific">Bacillus anthracis</name>
    <dbReference type="NCBI Taxonomy" id="1392"/>
    <lineage>
        <taxon>Bacteria</taxon>
        <taxon>Bacillati</taxon>
        <taxon>Bacillota</taxon>
        <taxon>Bacilli</taxon>
        <taxon>Bacillales</taxon>
        <taxon>Bacillaceae</taxon>
        <taxon>Bacillus</taxon>
        <taxon>Bacillus cereus group</taxon>
    </lineage>
</organism>
<name>Y6523_BACAN</name>
<evidence type="ECO:0000255" key="1"/>
<evidence type="ECO:0000305" key="2"/>
<proteinExistence type="inferred from homology"/>
<keyword id="KW-0067">ATP-binding</keyword>
<keyword id="KW-0547">Nucleotide-binding</keyword>
<keyword id="KW-0614">Plasmid</keyword>
<keyword id="KW-1185">Reference proteome</keyword>
<accession>Q6F054</accession>
<accession>Q8KYG1</accession>
<accession>Q9RN07</accession>
<reference key="1">
    <citation type="journal article" date="1999" name="J. Appl. Microbiol.">
        <title>Sequence, assembly and analysis of pXO1 and pXO2.</title>
        <authorList>
            <person name="Okinaka R.T."/>
            <person name="Cloud K."/>
            <person name="Hampton O."/>
            <person name="Hoffmaster A."/>
            <person name="Hill K.K."/>
            <person name="Keim P."/>
            <person name="Koehler T."/>
            <person name="Lamke G."/>
            <person name="Kumano S."/>
            <person name="Manter D."/>
            <person name="Martinez Y."/>
            <person name="Ricke D."/>
            <person name="Svensson R."/>
            <person name="Jackson P.J."/>
        </authorList>
    </citation>
    <scope>NUCLEOTIDE SEQUENCE [GENOMIC DNA]</scope>
    <source>
        <strain>Pasteur</strain>
    </source>
</reference>
<reference key="2">
    <citation type="journal article" date="2002" name="Science">
        <title>Comparative genome sequencing for discovery of novel polymorphisms in Bacillus anthracis.</title>
        <authorList>
            <person name="Read T.D."/>
            <person name="Salzberg S.L."/>
            <person name="Pop M."/>
            <person name="Shumway M.F."/>
            <person name="Umayam L."/>
            <person name="Jiang L."/>
            <person name="Holtzapple E."/>
            <person name="Busch J.D."/>
            <person name="Smith K.L."/>
            <person name="Schupp J.M."/>
            <person name="Solomon D."/>
            <person name="Keim P."/>
            <person name="Fraser C.M."/>
        </authorList>
    </citation>
    <scope>NUCLEOTIDE SEQUENCE [GENOMIC DNA]</scope>
    <source>
        <strain>Ames / isolate Florida / A2012</strain>
    </source>
</reference>
<reference key="3">
    <citation type="journal article" date="2009" name="J. Bacteriol.">
        <title>The complete genome sequence of Bacillus anthracis Ames 'Ancestor'.</title>
        <authorList>
            <person name="Ravel J."/>
            <person name="Jiang L."/>
            <person name="Stanley S.T."/>
            <person name="Wilson M.R."/>
            <person name="Decker R.S."/>
            <person name="Read T.D."/>
            <person name="Worsham P."/>
            <person name="Keim P.S."/>
            <person name="Salzberg S.L."/>
            <person name="Fraser-Liggett C.M."/>
            <person name="Rasko D.A."/>
        </authorList>
    </citation>
    <scope>NUCLEOTIDE SEQUENCE [LARGE SCALE GENOMIC DNA]</scope>
    <source>
        <strain>Ames ancestor</strain>
    </source>
</reference>
<comment type="similarity">
    <text evidence="2">Belongs to the GSP E family.</text>
</comment>
<feature type="chain" id="PRO_0000207307" description="Uncharacterized protein pXO2-25/BXB0023/GBAA_pXO2_0023">
    <location>
        <begin position="1"/>
        <end position="441"/>
    </location>
</feature>
<feature type="binding site" evidence="1">
    <location>
        <begin position="217"/>
        <end position="224"/>
    </location>
    <ligand>
        <name>ATP</name>
        <dbReference type="ChEBI" id="CHEBI:30616"/>
    </ligand>
</feature>
<geneLocation type="plasmid">
    <name>pXO2</name>
</geneLocation>
<gene>
    <name type="ordered locus">pXO2-25</name>
    <name type="ordered locus">BXB0023</name>
    <name type="ordered locus">GBAA_pXO2_0023</name>
</gene>
<protein>
    <recommendedName>
        <fullName>Uncharacterized protein pXO2-25/BXB0023/GBAA_pXO2_0023</fullName>
    </recommendedName>
</protein>